<accession>C3PH72</accession>
<comment type="function">
    <text evidence="1">Specifically methylates guanosine-37 in various tRNAs.</text>
</comment>
<comment type="catalytic activity">
    <reaction evidence="1">
        <text>guanosine(37) in tRNA + S-adenosyl-L-methionine = N(1)-methylguanosine(37) in tRNA + S-adenosyl-L-homocysteine + H(+)</text>
        <dbReference type="Rhea" id="RHEA:36899"/>
        <dbReference type="Rhea" id="RHEA-COMP:10145"/>
        <dbReference type="Rhea" id="RHEA-COMP:10147"/>
        <dbReference type="ChEBI" id="CHEBI:15378"/>
        <dbReference type="ChEBI" id="CHEBI:57856"/>
        <dbReference type="ChEBI" id="CHEBI:59789"/>
        <dbReference type="ChEBI" id="CHEBI:73542"/>
        <dbReference type="ChEBI" id="CHEBI:74269"/>
        <dbReference type="EC" id="2.1.1.228"/>
    </reaction>
</comment>
<comment type="subunit">
    <text evidence="1">Homodimer.</text>
</comment>
<comment type="subcellular location">
    <subcellularLocation>
        <location evidence="1">Cytoplasm</location>
    </subcellularLocation>
</comment>
<comment type="similarity">
    <text evidence="1">Belongs to the RNA methyltransferase TrmD family.</text>
</comment>
<keyword id="KW-0963">Cytoplasm</keyword>
<keyword id="KW-0489">Methyltransferase</keyword>
<keyword id="KW-1185">Reference proteome</keyword>
<keyword id="KW-0949">S-adenosyl-L-methionine</keyword>
<keyword id="KW-0808">Transferase</keyword>
<keyword id="KW-0819">tRNA processing</keyword>
<sequence length="280" mass="31093">MRIDVLTIFPEYLDPLRHALLGKAIEQGKLAVGVHDLRQWATDAHKSVDDSPYGGGPGMVMKPEVWGPALDDVSSGTASTQDLQSALPHLSKPRHDDIHGVEARSYGESEDSDKPLLIVPTPAGKPFTQADAQAWSAEEHIVFACGRYEGIDQRVVDDAQQRYRVREVSIGDYVLIGGEVAALVIAEAVVRLIPGVLGNRRSHEEDSFSDGLLEGPSYTKPREWRDLQVPDVLTSGDHARVDRWRREQSLARTWQRRPELLDAAELSDADRAYLETLEED</sequence>
<gene>
    <name evidence="1" type="primary">trmD</name>
    <name type="ordered locus">cauri_1583</name>
</gene>
<organism>
    <name type="scientific">Corynebacterium aurimucosum (strain ATCC 700975 / DSM 44827 / CIP 107346 / CN-1)</name>
    <name type="common">Corynebacterium nigricans</name>
    <dbReference type="NCBI Taxonomy" id="548476"/>
    <lineage>
        <taxon>Bacteria</taxon>
        <taxon>Bacillati</taxon>
        <taxon>Actinomycetota</taxon>
        <taxon>Actinomycetes</taxon>
        <taxon>Mycobacteriales</taxon>
        <taxon>Corynebacteriaceae</taxon>
        <taxon>Corynebacterium</taxon>
    </lineage>
</organism>
<reference key="1">
    <citation type="journal article" date="2010" name="BMC Genomics">
        <title>Complete genome sequence and lifestyle of black-pigmented Corynebacterium aurimucosum ATCC 700975 (formerly C. nigricans CN-1) isolated from a vaginal swab of a woman with spontaneous abortion.</title>
        <authorList>
            <person name="Trost E."/>
            <person name="Gotker S."/>
            <person name="Schneider J."/>
            <person name="Schneiker-Bekel S."/>
            <person name="Szczepanowski R."/>
            <person name="Tilker A."/>
            <person name="Viehoever P."/>
            <person name="Arnold W."/>
            <person name="Bekel T."/>
            <person name="Blom J."/>
            <person name="Gartemann K.H."/>
            <person name="Linke B."/>
            <person name="Goesmann A."/>
            <person name="Puhler A."/>
            <person name="Shukla S.K."/>
            <person name="Tauch A."/>
        </authorList>
    </citation>
    <scope>NUCLEOTIDE SEQUENCE [LARGE SCALE GENOMIC DNA]</scope>
    <source>
        <strain>ATCC 700975 / DSM 44827 / CIP 107346 / CN-1</strain>
    </source>
</reference>
<proteinExistence type="inferred from homology"/>
<dbReference type="EC" id="2.1.1.228" evidence="1"/>
<dbReference type="EMBL" id="CP001601">
    <property type="protein sequence ID" value="ACP33176.1"/>
    <property type="molecule type" value="Genomic_DNA"/>
</dbReference>
<dbReference type="RefSeq" id="WP_010190424.1">
    <property type="nucleotide sequence ID" value="NC_012590.1"/>
</dbReference>
<dbReference type="SMR" id="C3PH72"/>
<dbReference type="STRING" id="548476.cauri_1583"/>
<dbReference type="GeneID" id="31924213"/>
<dbReference type="KEGG" id="car:cauri_1583"/>
<dbReference type="eggNOG" id="COG0336">
    <property type="taxonomic scope" value="Bacteria"/>
</dbReference>
<dbReference type="HOGENOM" id="CLU_047363_0_0_11"/>
<dbReference type="OrthoDB" id="9807416at2"/>
<dbReference type="Proteomes" id="UP000002077">
    <property type="component" value="Chromosome"/>
</dbReference>
<dbReference type="GO" id="GO:0005829">
    <property type="term" value="C:cytosol"/>
    <property type="evidence" value="ECO:0007669"/>
    <property type="project" value="TreeGrafter"/>
</dbReference>
<dbReference type="GO" id="GO:0052906">
    <property type="term" value="F:tRNA (guanine(37)-N1)-methyltransferase activity"/>
    <property type="evidence" value="ECO:0007669"/>
    <property type="project" value="UniProtKB-UniRule"/>
</dbReference>
<dbReference type="GO" id="GO:0002939">
    <property type="term" value="P:tRNA N1-guanine methylation"/>
    <property type="evidence" value="ECO:0007669"/>
    <property type="project" value="TreeGrafter"/>
</dbReference>
<dbReference type="CDD" id="cd18080">
    <property type="entry name" value="TrmD-like"/>
    <property type="match status" value="1"/>
</dbReference>
<dbReference type="FunFam" id="1.10.1270.20:FF:000001">
    <property type="entry name" value="tRNA (guanine-N(1)-)-methyltransferase"/>
    <property type="match status" value="1"/>
</dbReference>
<dbReference type="Gene3D" id="3.40.1280.10">
    <property type="match status" value="1"/>
</dbReference>
<dbReference type="Gene3D" id="1.10.1270.20">
    <property type="entry name" value="tRNA(m1g37)methyltransferase, domain 2"/>
    <property type="match status" value="1"/>
</dbReference>
<dbReference type="HAMAP" id="MF_00605">
    <property type="entry name" value="TrmD"/>
    <property type="match status" value="1"/>
</dbReference>
<dbReference type="InterPro" id="IPR029028">
    <property type="entry name" value="Alpha/beta_knot_MTases"/>
</dbReference>
<dbReference type="InterPro" id="IPR023148">
    <property type="entry name" value="tRNA_m1G_MeTrfase_C_sf"/>
</dbReference>
<dbReference type="InterPro" id="IPR002649">
    <property type="entry name" value="tRNA_m1G_MeTrfase_TrmD"/>
</dbReference>
<dbReference type="InterPro" id="IPR029026">
    <property type="entry name" value="tRNA_m1G_MTases_N"/>
</dbReference>
<dbReference type="InterPro" id="IPR016009">
    <property type="entry name" value="tRNA_MeTrfase_TRMD/TRM10"/>
</dbReference>
<dbReference type="NCBIfam" id="NF000648">
    <property type="entry name" value="PRK00026.1"/>
    <property type="match status" value="1"/>
</dbReference>
<dbReference type="PANTHER" id="PTHR46417">
    <property type="entry name" value="TRNA (GUANINE-N(1)-)-METHYLTRANSFERASE"/>
    <property type="match status" value="1"/>
</dbReference>
<dbReference type="PANTHER" id="PTHR46417:SF1">
    <property type="entry name" value="TRNA (GUANINE-N(1)-)-METHYLTRANSFERASE"/>
    <property type="match status" value="1"/>
</dbReference>
<dbReference type="Pfam" id="PF01746">
    <property type="entry name" value="tRNA_m1G_MT"/>
    <property type="match status" value="2"/>
</dbReference>
<dbReference type="PIRSF" id="PIRSF000386">
    <property type="entry name" value="tRNA_mtase"/>
    <property type="match status" value="1"/>
</dbReference>
<dbReference type="SUPFAM" id="SSF75217">
    <property type="entry name" value="alpha/beta knot"/>
    <property type="match status" value="1"/>
</dbReference>
<protein>
    <recommendedName>
        <fullName evidence="1">tRNA (guanine-N(1)-)-methyltransferase</fullName>
        <ecNumber evidence="1">2.1.1.228</ecNumber>
    </recommendedName>
    <alternativeName>
        <fullName evidence="1">M1G-methyltransferase</fullName>
    </alternativeName>
    <alternativeName>
        <fullName evidence="1">tRNA [GM37] methyltransferase</fullName>
    </alternativeName>
</protein>
<feature type="chain" id="PRO_1000198566" description="tRNA (guanine-N(1)-)-methyltransferase">
    <location>
        <begin position="1"/>
        <end position="280"/>
    </location>
</feature>
<feature type="region of interest" description="Disordered" evidence="2">
    <location>
        <begin position="71"/>
        <end position="94"/>
    </location>
</feature>
<feature type="compositionally biased region" description="Polar residues" evidence="2">
    <location>
        <begin position="74"/>
        <end position="84"/>
    </location>
</feature>
<feature type="binding site" evidence="1">
    <location>
        <position position="146"/>
    </location>
    <ligand>
        <name>S-adenosyl-L-methionine</name>
        <dbReference type="ChEBI" id="CHEBI:59789"/>
    </ligand>
</feature>
<feature type="binding site" evidence="1">
    <location>
        <begin position="170"/>
        <end position="175"/>
    </location>
    <ligand>
        <name>S-adenosyl-L-methionine</name>
        <dbReference type="ChEBI" id="CHEBI:59789"/>
    </ligand>
</feature>
<name>TRMD_CORA7</name>
<evidence type="ECO:0000255" key="1">
    <source>
        <dbReference type="HAMAP-Rule" id="MF_00605"/>
    </source>
</evidence>
<evidence type="ECO:0000256" key="2">
    <source>
        <dbReference type="SAM" id="MobiDB-lite"/>
    </source>
</evidence>